<accession>A5VWL3</accession>
<gene>
    <name evidence="1" type="primary">trpB</name>
    <name type="ordered locus">Pput_0098</name>
</gene>
<feature type="chain" id="PRO_1000018378" description="Tryptophan synthase beta chain">
    <location>
        <begin position="1"/>
        <end position="405"/>
    </location>
</feature>
<feature type="modified residue" description="N6-(pyridoxal phosphate)lysine" evidence="1">
    <location>
        <position position="95"/>
    </location>
</feature>
<reference key="1">
    <citation type="submission" date="2007-05" db="EMBL/GenBank/DDBJ databases">
        <title>Complete sequence of Pseudomonas putida F1.</title>
        <authorList>
            <consortium name="US DOE Joint Genome Institute"/>
            <person name="Copeland A."/>
            <person name="Lucas S."/>
            <person name="Lapidus A."/>
            <person name="Barry K."/>
            <person name="Detter J.C."/>
            <person name="Glavina del Rio T."/>
            <person name="Hammon N."/>
            <person name="Israni S."/>
            <person name="Dalin E."/>
            <person name="Tice H."/>
            <person name="Pitluck S."/>
            <person name="Chain P."/>
            <person name="Malfatti S."/>
            <person name="Shin M."/>
            <person name="Vergez L."/>
            <person name="Schmutz J."/>
            <person name="Larimer F."/>
            <person name="Land M."/>
            <person name="Hauser L."/>
            <person name="Kyrpides N."/>
            <person name="Lykidis A."/>
            <person name="Parales R."/>
            <person name="Richardson P."/>
        </authorList>
    </citation>
    <scope>NUCLEOTIDE SEQUENCE [LARGE SCALE GENOMIC DNA]</scope>
    <source>
        <strain>ATCC 700007 / DSM 6899 / JCM 31910 / BCRC 17059 / LMG 24140 / F1</strain>
    </source>
</reference>
<keyword id="KW-0028">Amino-acid biosynthesis</keyword>
<keyword id="KW-0057">Aromatic amino acid biosynthesis</keyword>
<keyword id="KW-0456">Lyase</keyword>
<keyword id="KW-0663">Pyridoxal phosphate</keyword>
<keyword id="KW-0822">Tryptophan biosynthesis</keyword>
<evidence type="ECO:0000255" key="1">
    <source>
        <dbReference type="HAMAP-Rule" id="MF_00133"/>
    </source>
</evidence>
<sequence length="405" mass="44055">MTQSQYRPGPDANGLFGSFGGRYVAETLMPLVLDLAREYEAAKADPKFLEELAYFQRDYIGRPNPLYFAERLTEHCGGAKIFFKREELNHTGAHKVNNCIGQVLLAKRMGKKRLIAETGAGMHGVATATVAARFGLPCVIYMGATDIERQQANVFRMKLLGAEIVPVTAGTGTLKDAMNEALRDWVTNVEDTFYLIGTVAGPHPYPAMVRDFQSIIGKETRAQLQEKEGRLPDSLVACVGGGSNAMGLFHEFLEEPSVQIIGVEAGGHGVHTDKHAASLNGGVPGVLHGNRTYLLQDQDGQITDAHSISAGLDYPGIGPEHAYLHEVKRVEYVSITDDEALDAFHATCRLEGIIPALESSHALAEAIKRAPKLPKDHLMVVCLSGRGDKDMQTVMNHMAAQEKHA</sequence>
<proteinExistence type="inferred from homology"/>
<comment type="function">
    <text evidence="1">The beta subunit is responsible for the synthesis of L-tryptophan from indole and L-serine.</text>
</comment>
<comment type="catalytic activity">
    <reaction evidence="1">
        <text>(1S,2R)-1-C-(indol-3-yl)glycerol 3-phosphate + L-serine = D-glyceraldehyde 3-phosphate + L-tryptophan + H2O</text>
        <dbReference type="Rhea" id="RHEA:10532"/>
        <dbReference type="ChEBI" id="CHEBI:15377"/>
        <dbReference type="ChEBI" id="CHEBI:33384"/>
        <dbReference type="ChEBI" id="CHEBI:57912"/>
        <dbReference type="ChEBI" id="CHEBI:58866"/>
        <dbReference type="ChEBI" id="CHEBI:59776"/>
        <dbReference type="EC" id="4.2.1.20"/>
    </reaction>
</comment>
<comment type="cofactor">
    <cofactor evidence="1">
        <name>pyridoxal 5'-phosphate</name>
        <dbReference type="ChEBI" id="CHEBI:597326"/>
    </cofactor>
</comment>
<comment type="pathway">
    <text evidence="1">Amino-acid biosynthesis; L-tryptophan biosynthesis; L-tryptophan from chorismate: step 5/5.</text>
</comment>
<comment type="subunit">
    <text evidence="1">Tetramer of two alpha and two beta chains.</text>
</comment>
<comment type="similarity">
    <text evidence="1">Belongs to the TrpB family.</text>
</comment>
<protein>
    <recommendedName>
        <fullName evidence="1">Tryptophan synthase beta chain</fullName>
        <ecNumber evidence="1">4.2.1.20</ecNumber>
    </recommendedName>
</protein>
<name>TRPB_PSEP1</name>
<organism>
    <name type="scientific">Pseudomonas putida (strain ATCC 700007 / DSM 6899 / JCM 31910 / BCRC 17059 / LMG 24140 / F1)</name>
    <dbReference type="NCBI Taxonomy" id="351746"/>
    <lineage>
        <taxon>Bacteria</taxon>
        <taxon>Pseudomonadati</taxon>
        <taxon>Pseudomonadota</taxon>
        <taxon>Gammaproteobacteria</taxon>
        <taxon>Pseudomonadales</taxon>
        <taxon>Pseudomonadaceae</taxon>
        <taxon>Pseudomonas</taxon>
    </lineage>
</organism>
<dbReference type="EC" id="4.2.1.20" evidence="1"/>
<dbReference type="EMBL" id="CP000712">
    <property type="protein sequence ID" value="ABQ76273.1"/>
    <property type="molecule type" value="Genomic_DNA"/>
</dbReference>
<dbReference type="SMR" id="A5VWL3"/>
<dbReference type="KEGG" id="ppf:Pput_0098"/>
<dbReference type="eggNOG" id="COG0133">
    <property type="taxonomic scope" value="Bacteria"/>
</dbReference>
<dbReference type="HOGENOM" id="CLU_016734_3_1_6"/>
<dbReference type="UniPathway" id="UPA00035">
    <property type="reaction ID" value="UER00044"/>
</dbReference>
<dbReference type="GO" id="GO:0005737">
    <property type="term" value="C:cytoplasm"/>
    <property type="evidence" value="ECO:0007669"/>
    <property type="project" value="TreeGrafter"/>
</dbReference>
<dbReference type="GO" id="GO:0004834">
    <property type="term" value="F:tryptophan synthase activity"/>
    <property type="evidence" value="ECO:0007669"/>
    <property type="project" value="UniProtKB-UniRule"/>
</dbReference>
<dbReference type="CDD" id="cd06446">
    <property type="entry name" value="Trp-synth_B"/>
    <property type="match status" value="1"/>
</dbReference>
<dbReference type="FunFam" id="3.40.50.1100:FF:000001">
    <property type="entry name" value="Tryptophan synthase beta chain"/>
    <property type="match status" value="1"/>
</dbReference>
<dbReference type="FunFam" id="3.40.50.1100:FF:000004">
    <property type="entry name" value="Tryptophan synthase beta chain"/>
    <property type="match status" value="1"/>
</dbReference>
<dbReference type="Gene3D" id="3.40.50.1100">
    <property type="match status" value="2"/>
</dbReference>
<dbReference type="HAMAP" id="MF_00133">
    <property type="entry name" value="Trp_synth_beta"/>
    <property type="match status" value="1"/>
</dbReference>
<dbReference type="InterPro" id="IPR006653">
    <property type="entry name" value="Trp_synth_b_CS"/>
</dbReference>
<dbReference type="InterPro" id="IPR006654">
    <property type="entry name" value="Trp_synth_beta"/>
</dbReference>
<dbReference type="InterPro" id="IPR023026">
    <property type="entry name" value="Trp_synth_beta/beta-like"/>
</dbReference>
<dbReference type="InterPro" id="IPR001926">
    <property type="entry name" value="TrpB-like_PALP"/>
</dbReference>
<dbReference type="InterPro" id="IPR036052">
    <property type="entry name" value="TrpB-like_PALP_sf"/>
</dbReference>
<dbReference type="NCBIfam" id="TIGR00263">
    <property type="entry name" value="trpB"/>
    <property type="match status" value="1"/>
</dbReference>
<dbReference type="PANTHER" id="PTHR48077:SF3">
    <property type="entry name" value="TRYPTOPHAN SYNTHASE"/>
    <property type="match status" value="1"/>
</dbReference>
<dbReference type="PANTHER" id="PTHR48077">
    <property type="entry name" value="TRYPTOPHAN SYNTHASE-RELATED"/>
    <property type="match status" value="1"/>
</dbReference>
<dbReference type="Pfam" id="PF00291">
    <property type="entry name" value="PALP"/>
    <property type="match status" value="1"/>
</dbReference>
<dbReference type="PIRSF" id="PIRSF001413">
    <property type="entry name" value="Trp_syn_beta"/>
    <property type="match status" value="1"/>
</dbReference>
<dbReference type="SUPFAM" id="SSF53686">
    <property type="entry name" value="Tryptophan synthase beta subunit-like PLP-dependent enzymes"/>
    <property type="match status" value="1"/>
</dbReference>
<dbReference type="PROSITE" id="PS00168">
    <property type="entry name" value="TRP_SYNTHASE_BETA"/>
    <property type="match status" value="1"/>
</dbReference>